<keyword id="KW-0028">Amino-acid biosynthesis</keyword>
<keyword id="KW-0963">Cytoplasm</keyword>
<keyword id="KW-0456">Lyase</keyword>
<keyword id="KW-0479">Metal-binding</keyword>
<keyword id="KW-0486">Methionine biosynthesis</keyword>
<keyword id="KW-1185">Reference proteome</keyword>
<keyword id="KW-0862">Zinc</keyword>
<evidence type="ECO:0000255" key="1">
    <source>
        <dbReference type="HAMAP-Rule" id="MF_03116"/>
    </source>
</evidence>
<name>MTNB_COPC7</name>
<accession>A8NQV9</accession>
<proteinExistence type="inferred from homology"/>
<dbReference type="EC" id="4.2.1.109" evidence="1"/>
<dbReference type="EMBL" id="AACS02000008">
    <property type="protein sequence ID" value="EAU86126.2"/>
    <property type="molecule type" value="Genomic_DNA"/>
</dbReference>
<dbReference type="RefSeq" id="XP_001835555.2">
    <property type="nucleotide sequence ID" value="XM_001835503.2"/>
</dbReference>
<dbReference type="SMR" id="A8NQV9"/>
<dbReference type="FunCoup" id="A8NQV9">
    <property type="interactions" value="296"/>
</dbReference>
<dbReference type="STRING" id="240176.A8NQV9"/>
<dbReference type="GeneID" id="6012087"/>
<dbReference type="KEGG" id="cci:CC1G_03337"/>
<dbReference type="VEuPathDB" id="FungiDB:CC1G_03337"/>
<dbReference type="eggNOG" id="KOG2631">
    <property type="taxonomic scope" value="Eukaryota"/>
</dbReference>
<dbReference type="HOGENOM" id="CLU_006033_4_0_1"/>
<dbReference type="InParanoid" id="A8NQV9"/>
<dbReference type="OMA" id="WFPGTSG"/>
<dbReference type="OrthoDB" id="191080at2759"/>
<dbReference type="UniPathway" id="UPA00904">
    <property type="reaction ID" value="UER00875"/>
</dbReference>
<dbReference type="Proteomes" id="UP000001861">
    <property type="component" value="Unassembled WGS sequence"/>
</dbReference>
<dbReference type="GO" id="GO:0005737">
    <property type="term" value="C:cytoplasm"/>
    <property type="evidence" value="ECO:0007669"/>
    <property type="project" value="UniProtKB-SubCell"/>
</dbReference>
<dbReference type="GO" id="GO:0046570">
    <property type="term" value="F:methylthioribulose 1-phosphate dehydratase activity"/>
    <property type="evidence" value="ECO:0007669"/>
    <property type="project" value="UniProtKB-UniRule"/>
</dbReference>
<dbReference type="GO" id="GO:0008270">
    <property type="term" value="F:zinc ion binding"/>
    <property type="evidence" value="ECO:0007669"/>
    <property type="project" value="UniProtKB-UniRule"/>
</dbReference>
<dbReference type="GO" id="GO:0019509">
    <property type="term" value="P:L-methionine salvage from methylthioadenosine"/>
    <property type="evidence" value="ECO:0007669"/>
    <property type="project" value="UniProtKB-UniRule"/>
</dbReference>
<dbReference type="FunFam" id="3.40.225.10:FF:000003">
    <property type="entry name" value="Methylthioribulose-1-phosphate dehydratase"/>
    <property type="match status" value="1"/>
</dbReference>
<dbReference type="Gene3D" id="3.40.225.10">
    <property type="entry name" value="Class II aldolase/adducin N-terminal domain"/>
    <property type="match status" value="1"/>
</dbReference>
<dbReference type="HAMAP" id="MF_03116">
    <property type="entry name" value="Salvage_MtnB_euk"/>
    <property type="match status" value="1"/>
</dbReference>
<dbReference type="InterPro" id="IPR001303">
    <property type="entry name" value="Aldolase_II/adducin_N"/>
</dbReference>
<dbReference type="InterPro" id="IPR036409">
    <property type="entry name" value="Aldolase_II/adducin_N_sf"/>
</dbReference>
<dbReference type="InterPro" id="IPR017714">
    <property type="entry name" value="MethylthioRu-1-P_deHdtase_MtnB"/>
</dbReference>
<dbReference type="InterPro" id="IPR027514">
    <property type="entry name" value="Salvage_MtnB_euk"/>
</dbReference>
<dbReference type="NCBIfam" id="TIGR03328">
    <property type="entry name" value="salvage_mtnB"/>
    <property type="match status" value="1"/>
</dbReference>
<dbReference type="PANTHER" id="PTHR10640">
    <property type="entry name" value="METHYLTHIORIBULOSE-1-PHOSPHATE DEHYDRATASE"/>
    <property type="match status" value="1"/>
</dbReference>
<dbReference type="PANTHER" id="PTHR10640:SF7">
    <property type="entry name" value="METHYLTHIORIBULOSE-1-PHOSPHATE DEHYDRATASE"/>
    <property type="match status" value="1"/>
</dbReference>
<dbReference type="Pfam" id="PF00596">
    <property type="entry name" value="Aldolase_II"/>
    <property type="match status" value="1"/>
</dbReference>
<dbReference type="SMART" id="SM01007">
    <property type="entry name" value="Aldolase_II"/>
    <property type="match status" value="1"/>
</dbReference>
<dbReference type="SUPFAM" id="SSF53639">
    <property type="entry name" value="AraD/HMP-PK domain-like"/>
    <property type="match status" value="1"/>
</dbReference>
<sequence>MSEEIANQNPDALVISKDPLHPANLIPELCASFYHLGWVTGTGGGISIRQGNIVYIAPSGVQKERIKPTDIFVLPYPQPPCDPHADRIFLRRPSNNLKESACTPLFWNSFELRDAGSCIHTHSQHAVMATLLWPGEVFKVSHLMIKGVRIGGTGKALSYLDTLVVPIIENTPFEEDLKDSMAEAMKKYPDAAGVLVRRHGVYVWGTDWEKAKTQTECLDYLFEVAVKMKLAGVPTLLNEDK</sequence>
<comment type="function">
    <text evidence="1">Catalyzes the dehydration of methylthioribulose-1-phosphate (MTRu-1-P) into 2,3-diketo-5-methylthiopentyl-1-phosphate (DK-MTP-1-P).</text>
</comment>
<comment type="catalytic activity">
    <reaction evidence="1">
        <text>5-(methylsulfanyl)-D-ribulose 1-phosphate = 5-methylsulfanyl-2,3-dioxopentyl phosphate + H2O</text>
        <dbReference type="Rhea" id="RHEA:15549"/>
        <dbReference type="ChEBI" id="CHEBI:15377"/>
        <dbReference type="ChEBI" id="CHEBI:58548"/>
        <dbReference type="ChEBI" id="CHEBI:58828"/>
        <dbReference type="EC" id="4.2.1.109"/>
    </reaction>
</comment>
<comment type="cofactor">
    <cofactor evidence="1">
        <name>Zn(2+)</name>
        <dbReference type="ChEBI" id="CHEBI:29105"/>
    </cofactor>
    <text evidence="1">Binds 1 zinc ion per subunit.</text>
</comment>
<comment type="pathway">
    <text evidence="1">Amino-acid biosynthesis; L-methionine biosynthesis via salvage pathway; L-methionine from S-methyl-5-thio-alpha-D-ribose 1-phosphate: step 2/6.</text>
</comment>
<comment type="subcellular location">
    <subcellularLocation>
        <location evidence="1">Cytoplasm</location>
    </subcellularLocation>
</comment>
<comment type="similarity">
    <text evidence="1">Belongs to the aldolase class II family. MtnB subfamily.</text>
</comment>
<organism>
    <name type="scientific">Coprinopsis cinerea (strain Okayama-7 / 130 / ATCC MYA-4618 / FGSC 9003)</name>
    <name type="common">Inky cap fungus</name>
    <name type="synonym">Hormographiella aspergillata</name>
    <dbReference type="NCBI Taxonomy" id="240176"/>
    <lineage>
        <taxon>Eukaryota</taxon>
        <taxon>Fungi</taxon>
        <taxon>Dikarya</taxon>
        <taxon>Basidiomycota</taxon>
        <taxon>Agaricomycotina</taxon>
        <taxon>Agaricomycetes</taxon>
        <taxon>Agaricomycetidae</taxon>
        <taxon>Agaricales</taxon>
        <taxon>Agaricineae</taxon>
        <taxon>Psathyrellaceae</taxon>
        <taxon>Coprinopsis</taxon>
    </lineage>
</organism>
<gene>
    <name evidence="1" type="primary">MDE1</name>
    <name type="ORF">CC1G_03337</name>
</gene>
<protein>
    <recommendedName>
        <fullName evidence="1">Methylthioribulose-1-phosphate dehydratase</fullName>
        <shortName evidence="1">MTRu-1-P dehydratase</shortName>
        <ecNumber evidence="1">4.2.1.109</ecNumber>
    </recommendedName>
</protein>
<reference key="1">
    <citation type="journal article" date="2010" name="Proc. Natl. Acad. Sci. U.S.A.">
        <title>Insights into evolution of multicellular fungi from the assembled chromosomes of the mushroom Coprinopsis cinerea (Coprinus cinereus).</title>
        <authorList>
            <person name="Stajich J.E."/>
            <person name="Wilke S.K."/>
            <person name="Ahren D."/>
            <person name="Au C.H."/>
            <person name="Birren B.W."/>
            <person name="Borodovsky M."/>
            <person name="Burns C."/>
            <person name="Canbaeck B."/>
            <person name="Casselton L.A."/>
            <person name="Cheng C.K."/>
            <person name="Deng J."/>
            <person name="Dietrich F.S."/>
            <person name="Fargo D.C."/>
            <person name="Farman M.L."/>
            <person name="Gathman A.C."/>
            <person name="Goldberg J."/>
            <person name="Guigo R."/>
            <person name="Hoegger P.J."/>
            <person name="Hooker J.B."/>
            <person name="Huggins A."/>
            <person name="James T.Y."/>
            <person name="Kamada T."/>
            <person name="Kilaru S."/>
            <person name="Kodira C."/>
            <person name="Kuees U."/>
            <person name="Kupfer D."/>
            <person name="Kwan H.S."/>
            <person name="Lomsadze A."/>
            <person name="Li W."/>
            <person name="Lilly W.W."/>
            <person name="Ma L.-J."/>
            <person name="Mackey A.J."/>
            <person name="Manning G."/>
            <person name="Martin F."/>
            <person name="Muraguchi H."/>
            <person name="Natvig D.O."/>
            <person name="Palmerini H."/>
            <person name="Ramesh M.A."/>
            <person name="Rehmeyer C.J."/>
            <person name="Roe B.A."/>
            <person name="Shenoy N."/>
            <person name="Stanke M."/>
            <person name="Ter-Hovhannisyan V."/>
            <person name="Tunlid A."/>
            <person name="Velagapudi R."/>
            <person name="Vision T.J."/>
            <person name="Zeng Q."/>
            <person name="Zolan M.E."/>
            <person name="Pukkila P.J."/>
        </authorList>
    </citation>
    <scope>NUCLEOTIDE SEQUENCE [LARGE SCALE GENOMIC DNA]</scope>
    <source>
        <strain>Okayama-7 / 130 / ATCC MYA-4618 / FGSC 9003</strain>
    </source>
</reference>
<feature type="chain" id="PRO_0000393821" description="Methylthioribulose-1-phosphate dehydratase">
    <location>
        <begin position="1"/>
        <end position="241"/>
    </location>
</feature>
<feature type="binding site" evidence="1">
    <location>
        <position position="102"/>
    </location>
    <ligand>
        <name>substrate</name>
    </ligand>
</feature>
<feature type="binding site" evidence="1">
    <location>
        <position position="120"/>
    </location>
    <ligand>
        <name>Zn(2+)</name>
        <dbReference type="ChEBI" id="CHEBI:29105"/>
    </ligand>
</feature>
<feature type="binding site" evidence="1">
    <location>
        <position position="122"/>
    </location>
    <ligand>
        <name>Zn(2+)</name>
        <dbReference type="ChEBI" id="CHEBI:29105"/>
    </ligand>
</feature>
<feature type="binding site" evidence="1">
    <location>
        <position position="199"/>
    </location>
    <ligand>
        <name>Zn(2+)</name>
        <dbReference type="ChEBI" id="CHEBI:29105"/>
    </ligand>
</feature>